<feature type="chain" id="PRO_1000023771" description="Transcription antitermination protein NusB">
    <location>
        <begin position="1"/>
        <end position="134"/>
    </location>
</feature>
<organism>
    <name type="scientific">Shewanella baltica (strain OS185)</name>
    <dbReference type="NCBI Taxonomy" id="402882"/>
    <lineage>
        <taxon>Bacteria</taxon>
        <taxon>Pseudomonadati</taxon>
        <taxon>Pseudomonadota</taxon>
        <taxon>Gammaproteobacteria</taxon>
        <taxon>Alteromonadales</taxon>
        <taxon>Shewanellaceae</taxon>
        <taxon>Shewanella</taxon>
    </lineage>
</organism>
<protein>
    <recommendedName>
        <fullName evidence="1">Transcription antitermination protein NusB</fullName>
    </recommendedName>
    <alternativeName>
        <fullName evidence="1">Antitermination factor NusB</fullName>
    </alternativeName>
</protein>
<comment type="function">
    <text evidence="1">Involved in transcription antitermination. Required for transcription of ribosomal RNA (rRNA) genes. Binds specifically to the boxA antiterminator sequence of the ribosomal RNA (rrn) operons.</text>
</comment>
<comment type="similarity">
    <text evidence="1">Belongs to the NusB family.</text>
</comment>
<name>NUSB_SHEB8</name>
<accession>A6WR46</accession>
<reference key="1">
    <citation type="submission" date="2007-07" db="EMBL/GenBank/DDBJ databases">
        <title>Complete sequence of chromosome of Shewanella baltica OS185.</title>
        <authorList>
            <consortium name="US DOE Joint Genome Institute"/>
            <person name="Copeland A."/>
            <person name="Lucas S."/>
            <person name="Lapidus A."/>
            <person name="Barry K."/>
            <person name="Glavina del Rio T."/>
            <person name="Dalin E."/>
            <person name="Tice H."/>
            <person name="Pitluck S."/>
            <person name="Sims D."/>
            <person name="Brettin T."/>
            <person name="Bruce D."/>
            <person name="Detter J.C."/>
            <person name="Han C."/>
            <person name="Schmutz J."/>
            <person name="Larimer F."/>
            <person name="Land M."/>
            <person name="Hauser L."/>
            <person name="Kyrpides N."/>
            <person name="Mikhailova N."/>
            <person name="Brettar I."/>
            <person name="Rodrigues J."/>
            <person name="Konstantinidis K."/>
            <person name="Tiedje J."/>
            <person name="Richardson P."/>
        </authorList>
    </citation>
    <scope>NUCLEOTIDE SEQUENCE [LARGE SCALE GENOMIC DNA]</scope>
    <source>
        <strain>OS185</strain>
    </source>
</reference>
<gene>
    <name evidence="1" type="primary">nusB</name>
    <name type="ordered locus">Shew185_3154</name>
</gene>
<evidence type="ECO:0000255" key="1">
    <source>
        <dbReference type="HAMAP-Rule" id="MF_00073"/>
    </source>
</evidence>
<sequence>MKPSERRKARRLAVQAIYSWQLSGNNIADVEHEFLTEQSLDGVDVAYFRELFSGVATKKTQLDELIIPHLERPIDEVSPVEKAIVRLATYELTFRKDVPYKVAINEAIELAKAFGADESHKFVNGLLDKLVARK</sequence>
<proteinExistence type="inferred from homology"/>
<dbReference type="EMBL" id="CP000753">
    <property type="protein sequence ID" value="ABS09285.1"/>
    <property type="molecule type" value="Genomic_DNA"/>
</dbReference>
<dbReference type="RefSeq" id="WP_006082638.1">
    <property type="nucleotide sequence ID" value="NC_009665.1"/>
</dbReference>
<dbReference type="SMR" id="A6WR46"/>
<dbReference type="GeneID" id="67444384"/>
<dbReference type="KEGG" id="sbm:Shew185_3154"/>
<dbReference type="HOGENOM" id="CLU_087843_4_1_6"/>
<dbReference type="GO" id="GO:0005829">
    <property type="term" value="C:cytosol"/>
    <property type="evidence" value="ECO:0007669"/>
    <property type="project" value="TreeGrafter"/>
</dbReference>
<dbReference type="GO" id="GO:0003723">
    <property type="term" value="F:RNA binding"/>
    <property type="evidence" value="ECO:0007669"/>
    <property type="project" value="UniProtKB-UniRule"/>
</dbReference>
<dbReference type="GO" id="GO:0006353">
    <property type="term" value="P:DNA-templated transcription termination"/>
    <property type="evidence" value="ECO:0007669"/>
    <property type="project" value="UniProtKB-UniRule"/>
</dbReference>
<dbReference type="GO" id="GO:0031564">
    <property type="term" value="P:transcription antitermination"/>
    <property type="evidence" value="ECO:0007669"/>
    <property type="project" value="UniProtKB-KW"/>
</dbReference>
<dbReference type="CDD" id="cd00619">
    <property type="entry name" value="Terminator_NusB"/>
    <property type="match status" value="1"/>
</dbReference>
<dbReference type="FunFam" id="1.10.940.10:FF:000001">
    <property type="entry name" value="Transcription antitermination factor NusB"/>
    <property type="match status" value="1"/>
</dbReference>
<dbReference type="Gene3D" id="1.10.940.10">
    <property type="entry name" value="NusB-like"/>
    <property type="match status" value="1"/>
</dbReference>
<dbReference type="HAMAP" id="MF_00073">
    <property type="entry name" value="NusB"/>
    <property type="match status" value="1"/>
</dbReference>
<dbReference type="InterPro" id="IPR035926">
    <property type="entry name" value="NusB-like_sf"/>
</dbReference>
<dbReference type="InterPro" id="IPR011605">
    <property type="entry name" value="NusB_fam"/>
</dbReference>
<dbReference type="InterPro" id="IPR006027">
    <property type="entry name" value="NusB_RsmB_TIM44"/>
</dbReference>
<dbReference type="NCBIfam" id="TIGR01951">
    <property type="entry name" value="nusB"/>
    <property type="match status" value="1"/>
</dbReference>
<dbReference type="PANTHER" id="PTHR11078:SF3">
    <property type="entry name" value="ANTITERMINATION NUSB DOMAIN-CONTAINING PROTEIN"/>
    <property type="match status" value="1"/>
</dbReference>
<dbReference type="PANTHER" id="PTHR11078">
    <property type="entry name" value="N UTILIZATION SUBSTANCE PROTEIN B-RELATED"/>
    <property type="match status" value="1"/>
</dbReference>
<dbReference type="Pfam" id="PF01029">
    <property type="entry name" value="NusB"/>
    <property type="match status" value="1"/>
</dbReference>
<dbReference type="SUPFAM" id="SSF48013">
    <property type="entry name" value="NusB-like"/>
    <property type="match status" value="1"/>
</dbReference>
<keyword id="KW-0694">RNA-binding</keyword>
<keyword id="KW-0804">Transcription</keyword>
<keyword id="KW-0889">Transcription antitermination</keyword>
<keyword id="KW-0805">Transcription regulation</keyword>